<organism>
    <name type="scientific">Klebsiella aerogenes (strain ATCC 13048 / DSM 30053 / CCUG 1429 / JCM 1235 / KCTC 2190 / NBRC 13534 / NCIMB 10102 / NCTC 10006 / CDC 819-56)</name>
    <name type="common">Enterobacter aerogenes</name>
    <dbReference type="NCBI Taxonomy" id="1028307"/>
    <lineage>
        <taxon>Bacteria</taxon>
        <taxon>Pseudomonadati</taxon>
        <taxon>Pseudomonadota</taxon>
        <taxon>Gammaproteobacteria</taxon>
        <taxon>Enterobacterales</taxon>
        <taxon>Enterobacteriaceae</taxon>
        <taxon>Klebsiella/Raoultella group</taxon>
        <taxon>Klebsiella</taxon>
    </lineage>
</organism>
<feature type="chain" id="PRO_0000198344" description="Chemotaxis protein CheW">
    <location>
        <begin position="1"/>
        <end position="166"/>
    </location>
</feature>
<feature type="domain" description="CheW-like" evidence="1">
    <location>
        <begin position="16"/>
        <end position="156"/>
    </location>
</feature>
<feature type="sequence conflict" description="In Ref. 1; AAA24796." evidence="2" ref="1">
    <original>E</original>
    <variation>A</variation>
    <location>
        <position position="18"/>
    </location>
</feature>
<feature type="sequence conflict" description="In Ref. 1; AAA24796." evidence="2" ref="1">
    <original>E</original>
    <variation>K</variation>
    <location>
        <position position="38"/>
    </location>
</feature>
<feature type="sequence conflict" description="In Ref. 1; AAA24796." evidence="2" ref="1">
    <original>F</original>
    <variation>Y</variation>
    <location>
        <position position="75"/>
    </location>
</feature>
<feature type="sequence conflict" description="In Ref. 1; AAA24796." evidence="2" ref="1">
    <original>L</original>
    <variation>M</variation>
    <location>
        <position position="126"/>
    </location>
</feature>
<feature type="sequence conflict" description="In Ref. 1; AAA24796." evidence="2" ref="1">
    <original>ERM</original>
    <variation>AL</variation>
    <location>
        <begin position="139"/>
        <end position="141"/>
    </location>
</feature>
<feature type="sequence conflict" description="In Ref. 1; AAA24796." evidence="2" ref="1">
    <original>S</original>
    <variation>T</variation>
    <location>
        <position position="153"/>
    </location>
</feature>
<reference key="1">
    <citation type="journal article" date="1989" name="J. Bacteriol.">
        <title>Evolution of chemotactic-signal transducers in enteric bacteria.</title>
        <authorList>
            <person name="Dahl M.K."/>
            <person name="Boos W."/>
            <person name="Manson M.D."/>
        </authorList>
    </citation>
    <scope>NUCLEOTIDE SEQUENCE [GENOMIC DNA]</scope>
    <source>
        <strain>ATCC 13048 / DSM 30053 / CCUG 1429 / JCM 1235 / KCTC 2190 / NBRC 13534 / NCIMB 10102 / NCTC 10006 / CDC 819-56</strain>
    </source>
</reference>
<reference key="2">
    <citation type="journal article" date="2012" name="J. Bacteriol.">
        <title>Complete genome sequence of Enterobacter aerogenes KCTC 2190.</title>
        <authorList>
            <person name="Shin S.H."/>
            <person name="Kim S."/>
            <person name="Kim J.Y."/>
            <person name="Lee S."/>
            <person name="Um Y."/>
            <person name="Oh M.K."/>
            <person name="Kim Y.R."/>
            <person name="Lee J."/>
            <person name="Yang K.S."/>
        </authorList>
    </citation>
    <scope>NUCLEOTIDE SEQUENCE [LARGE SCALE GENOMIC DNA]</scope>
    <source>
        <strain>ATCC 13048 / DSM 30053 / CCUG 1429 / JCM 1235 / KCTC 2190 / NBRC 13534 / NCIMB 10102 / NCTC 10006 / CDC 819-56</strain>
    </source>
</reference>
<gene>
    <name type="primary">cheW</name>
    <name type="ordered locus">EAE_15530</name>
</gene>
<name>CHEW_KLEAK</name>
<dbReference type="EMBL" id="M26411">
    <property type="protein sequence ID" value="AAA24796.1"/>
    <property type="molecule type" value="Genomic_DNA"/>
</dbReference>
<dbReference type="EMBL" id="CP002824">
    <property type="protein sequence ID" value="AEG98017.1"/>
    <property type="molecule type" value="Genomic_DNA"/>
</dbReference>
<dbReference type="PIR" id="B32302">
    <property type="entry name" value="B32302"/>
</dbReference>
<dbReference type="RefSeq" id="WP_015367343.1">
    <property type="nucleotide sequence ID" value="NC_015663.1"/>
</dbReference>
<dbReference type="RefSeq" id="YP_004593296.1">
    <property type="nucleotide sequence ID" value="NC_015663.1"/>
</dbReference>
<dbReference type="SMR" id="P21821"/>
<dbReference type="GeneID" id="93311294"/>
<dbReference type="KEGG" id="eae:EAE_15530"/>
<dbReference type="PATRIC" id="fig|1028307.3.peg.3106"/>
<dbReference type="eggNOG" id="COG0835">
    <property type="taxonomic scope" value="Bacteria"/>
</dbReference>
<dbReference type="HOGENOM" id="CLU_048995_1_0_6"/>
<dbReference type="OrthoDB" id="9790406at2"/>
<dbReference type="Proteomes" id="UP000008881">
    <property type="component" value="Chromosome"/>
</dbReference>
<dbReference type="GO" id="GO:0005829">
    <property type="term" value="C:cytosol"/>
    <property type="evidence" value="ECO:0007669"/>
    <property type="project" value="TreeGrafter"/>
</dbReference>
<dbReference type="GO" id="GO:0006935">
    <property type="term" value="P:chemotaxis"/>
    <property type="evidence" value="ECO:0007669"/>
    <property type="project" value="UniProtKB-KW"/>
</dbReference>
<dbReference type="GO" id="GO:0007165">
    <property type="term" value="P:signal transduction"/>
    <property type="evidence" value="ECO:0007669"/>
    <property type="project" value="InterPro"/>
</dbReference>
<dbReference type="CDD" id="cd00732">
    <property type="entry name" value="CheW"/>
    <property type="match status" value="1"/>
</dbReference>
<dbReference type="FunFam" id="2.40.50.180:FF:000002">
    <property type="entry name" value="Chemotaxis protein CheW"/>
    <property type="match status" value="1"/>
</dbReference>
<dbReference type="Gene3D" id="2.40.50.180">
    <property type="entry name" value="CheA-289, Domain 4"/>
    <property type="match status" value="1"/>
</dbReference>
<dbReference type="Gene3D" id="2.30.30.40">
    <property type="entry name" value="SH3 Domains"/>
    <property type="match status" value="1"/>
</dbReference>
<dbReference type="InterPro" id="IPR039315">
    <property type="entry name" value="CheW"/>
</dbReference>
<dbReference type="InterPro" id="IPR036061">
    <property type="entry name" value="CheW-like_dom_sf"/>
</dbReference>
<dbReference type="InterPro" id="IPR002545">
    <property type="entry name" value="CheW-lke_dom"/>
</dbReference>
<dbReference type="NCBIfam" id="NF007903">
    <property type="entry name" value="PRK10612.1"/>
    <property type="match status" value="1"/>
</dbReference>
<dbReference type="PANTHER" id="PTHR22617:SF45">
    <property type="entry name" value="CHEMOTAXIS PROTEIN CHEW"/>
    <property type="match status" value="1"/>
</dbReference>
<dbReference type="PANTHER" id="PTHR22617">
    <property type="entry name" value="CHEMOTAXIS SENSOR HISTIDINE KINASE-RELATED"/>
    <property type="match status" value="1"/>
</dbReference>
<dbReference type="Pfam" id="PF01584">
    <property type="entry name" value="CheW"/>
    <property type="match status" value="1"/>
</dbReference>
<dbReference type="SMART" id="SM00260">
    <property type="entry name" value="CheW"/>
    <property type="match status" value="1"/>
</dbReference>
<dbReference type="SUPFAM" id="SSF50341">
    <property type="entry name" value="CheW-like"/>
    <property type="match status" value="1"/>
</dbReference>
<dbReference type="PROSITE" id="PS50851">
    <property type="entry name" value="CHEW"/>
    <property type="match status" value="1"/>
</dbReference>
<sequence>MAGLATVSKLAGETVGQEFLIFTLGNEEYGIDILKVQEIRGYDQVTRIANTPDFIKGVTNLRGVIVPIIDLRVKFAQQGVSYDENTVVIVLNFGQRVVGIVVDGVSDVLSLTAEQIRPAPEFAVTLATEYLTGLGALGERMLILVDIEKLLSSEEMALVDNVAKSH</sequence>
<keyword id="KW-0145">Chemotaxis</keyword>
<keyword id="KW-0963">Cytoplasm</keyword>
<keyword id="KW-1185">Reference proteome</keyword>
<evidence type="ECO:0000255" key="1">
    <source>
        <dbReference type="PROSITE-ProRule" id="PRU00052"/>
    </source>
</evidence>
<evidence type="ECO:0000305" key="2"/>
<proteinExistence type="predicted"/>
<comment type="function">
    <text>Involved in the transmission of sensory signals from the chemoreceptors to the flagellar motors.</text>
</comment>
<comment type="subcellular location">
    <subcellularLocation>
        <location>Cytoplasm</location>
    </subcellularLocation>
</comment>
<accession>P21821</accession>
<accession>G0DZQ5</accession>
<protein>
    <recommendedName>
        <fullName>Chemotaxis protein CheW</fullName>
    </recommendedName>
</protein>